<proteinExistence type="inferred from homology"/>
<keyword id="KW-0997">Cell inner membrane</keyword>
<keyword id="KW-1003">Cell membrane</keyword>
<keyword id="KW-0472">Membrane</keyword>
<keyword id="KW-1185">Reference proteome</keyword>
<keyword id="KW-0735">Signal-anchor</keyword>
<keyword id="KW-0812">Transmembrane</keyword>
<keyword id="KW-1133">Transmembrane helix</keyword>
<keyword id="KW-0813">Transport</keyword>
<name>MLAD_HAEIN</name>
<reference key="1">
    <citation type="journal article" date="1995" name="Science">
        <title>Whole-genome random sequencing and assembly of Haemophilus influenzae Rd.</title>
        <authorList>
            <person name="Fleischmann R.D."/>
            <person name="Adams M.D."/>
            <person name="White O."/>
            <person name="Clayton R.A."/>
            <person name="Kirkness E.F."/>
            <person name="Kerlavage A.R."/>
            <person name="Bult C.J."/>
            <person name="Tomb J.-F."/>
            <person name="Dougherty B.A."/>
            <person name="Merrick J.M."/>
            <person name="McKenney K."/>
            <person name="Sutton G.G."/>
            <person name="FitzHugh W."/>
            <person name="Fields C.A."/>
            <person name="Gocayne J.D."/>
            <person name="Scott J.D."/>
            <person name="Shirley R."/>
            <person name="Liu L.-I."/>
            <person name="Glodek A."/>
            <person name="Kelley J.M."/>
            <person name="Weidman J.F."/>
            <person name="Phillips C.A."/>
            <person name="Spriggs T."/>
            <person name="Hedblom E."/>
            <person name="Cotton M.D."/>
            <person name="Utterback T.R."/>
            <person name="Hanna M.C."/>
            <person name="Nguyen D.T."/>
            <person name="Saudek D.M."/>
            <person name="Brandon R.C."/>
            <person name="Fine L.D."/>
            <person name="Fritchman J.L."/>
            <person name="Fuhrmann J.L."/>
            <person name="Geoghagen N.S.M."/>
            <person name="Gnehm C.L."/>
            <person name="McDonald L.A."/>
            <person name="Small K.V."/>
            <person name="Fraser C.M."/>
            <person name="Smith H.O."/>
            <person name="Venter J.C."/>
        </authorList>
    </citation>
    <scope>NUCLEOTIDE SEQUENCE [LARGE SCALE GENOMIC DNA]</scope>
    <source>
        <strain>ATCC 51907 / DSM 11121 / KW20 / Rd</strain>
    </source>
</reference>
<accession>P45029</accession>
<protein>
    <recommendedName>
        <fullName evidence="1">Intermembrane phospholipid transport system binding protein MlaD</fullName>
    </recommendedName>
</protein>
<feature type="chain" id="PRO_0000169464" description="Intermembrane phospholipid transport system binding protein MlaD">
    <location>
        <begin position="1"/>
        <end position="167"/>
    </location>
</feature>
<feature type="topological domain" description="Cytoplasmic" evidence="1">
    <location>
        <begin position="1"/>
        <end position="6"/>
    </location>
</feature>
<feature type="transmembrane region" description="Helical; Signal-anchor for type II membrane protein" evidence="2">
    <location>
        <begin position="7"/>
        <end position="27"/>
    </location>
</feature>
<feature type="topological domain" description="Periplasmic" evidence="1">
    <location>
        <begin position="28"/>
        <end position="167"/>
    </location>
</feature>
<feature type="region of interest" description="MCE/MlaD" evidence="3">
    <location>
        <begin position="40"/>
        <end position="118"/>
    </location>
</feature>
<sequence>MRQTIKYEFWVGLFLLLGIGALVFLGLRVANVQGFAETKSYTVTATFDNIGGLKVRAPLKIGGVVIGRVSAITLDEKSYLPKVSIAINQEYNEIPENSSLSIKTSGLLGEQYIALTMGFDDGDTAMLKNGSQIQDTTSAMVLEDLIGQFLYGSKKSDGNEKSESTEQ</sequence>
<gene>
    <name evidence="1" type="primary">mlaD</name>
    <name type="ordered locus">HI_1085</name>
</gene>
<dbReference type="EMBL" id="L42023">
    <property type="protein sequence ID" value="AAC22741.1"/>
    <property type="molecule type" value="Genomic_DNA"/>
</dbReference>
<dbReference type="PIR" id="C64166">
    <property type="entry name" value="C64166"/>
</dbReference>
<dbReference type="RefSeq" id="NP_439242.1">
    <property type="nucleotide sequence ID" value="NC_000907.1"/>
</dbReference>
<dbReference type="SMR" id="P45029"/>
<dbReference type="STRING" id="71421.HI_1085"/>
<dbReference type="EnsemblBacteria" id="AAC22741">
    <property type="protein sequence ID" value="AAC22741"/>
    <property type="gene ID" value="HI_1085"/>
</dbReference>
<dbReference type="KEGG" id="hin:HI_1085"/>
<dbReference type="PATRIC" id="fig|71421.8.peg.1130"/>
<dbReference type="eggNOG" id="COG1463">
    <property type="taxonomic scope" value="Bacteria"/>
</dbReference>
<dbReference type="HOGENOM" id="CLU_107027_0_0_6"/>
<dbReference type="OrthoDB" id="9788420at2"/>
<dbReference type="PhylomeDB" id="P45029"/>
<dbReference type="BioCyc" id="HINF71421:G1GJ1-1120-MONOMER"/>
<dbReference type="Proteomes" id="UP000000579">
    <property type="component" value="Chromosome"/>
</dbReference>
<dbReference type="GO" id="GO:0005886">
    <property type="term" value="C:plasma membrane"/>
    <property type="evidence" value="ECO:0000318"/>
    <property type="project" value="GO_Central"/>
</dbReference>
<dbReference type="GO" id="GO:0120014">
    <property type="term" value="F:phospholipid transfer activity"/>
    <property type="evidence" value="ECO:0000318"/>
    <property type="project" value="GO_Central"/>
</dbReference>
<dbReference type="GO" id="GO:0120010">
    <property type="term" value="P:intermembrane phospholipid transfer"/>
    <property type="evidence" value="ECO:0000318"/>
    <property type="project" value="GO_Central"/>
</dbReference>
<dbReference type="InterPro" id="IPR030970">
    <property type="entry name" value="ABC_MlaD"/>
</dbReference>
<dbReference type="InterPro" id="IPR003399">
    <property type="entry name" value="Mce/MlaD"/>
</dbReference>
<dbReference type="InterPro" id="IPR052336">
    <property type="entry name" value="MlaD_Phospholipid_Transporter"/>
</dbReference>
<dbReference type="NCBIfam" id="TIGR04430">
    <property type="entry name" value="OM_asym_MlaD"/>
    <property type="match status" value="1"/>
</dbReference>
<dbReference type="PANTHER" id="PTHR33371:SF4">
    <property type="entry name" value="INTERMEMBRANE PHOSPHOLIPID TRANSPORT SYSTEM BINDING PROTEIN MLAD"/>
    <property type="match status" value="1"/>
</dbReference>
<dbReference type="PANTHER" id="PTHR33371">
    <property type="entry name" value="INTERMEMBRANE PHOSPHOLIPID TRANSPORT SYSTEM BINDING PROTEIN MLAD-RELATED"/>
    <property type="match status" value="1"/>
</dbReference>
<dbReference type="Pfam" id="PF02470">
    <property type="entry name" value="MlaD"/>
    <property type="match status" value="1"/>
</dbReference>
<evidence type="ECO:0000250" key="1">
    <source>
        <dbReference type="UniProtKB" id="P64604"/>
    </source>
</evidence>
<evidence type="ECO:0000255" key="2"/>
<evidence type="ECO:0000305" key="3"/>
<comment type="function">
    <text evidence="1">Part of the ABC transporter complex MlaFEDB, which is involved in a phospholipid transport pathway that maintains lipid asymmetry in the outer membrane by retrograde trafficking of phospholipids from the outer membrane to the inner membrane. MlaD functions in substrate binding with strong affinity for phospholipids and modulates ATP hydrolytic activity of the complex.</text>
</comment>
<comment type="subunit">
    <text evidence="1">The complex is composed of two ATP-binding proteins (MlaF), two transmembrane proteins (MlaE), two cytoplasmic solute-binding proteins (MlaB) and six periplasmic solute-binding proteins (MlaD).</text>
</comment>
<comment type="subcellular location">
    <subcellularLocation>
        <location evidence="1">Cell inner membrane</location>
        <topology evidence="1">Single-pass type II membrane protein</topology>
        <orientation evidence="1">Periplasmic side</orientation>
    </subcellularLocation>
</comment>
<comment type="similarity">
    <text evidence="3">Belongs to the MlaD family.</text>
</comment>
<organism>
    <name type="scientific">Haemophilus influenzae (strain ATCC 51907 / DSM 11121 / KW20 / Rd)</name>
    <dbReference type="NCBI Taxonomy" id="71421"/>
    <lineage>
        <taxon>Bacteria</taxon>
        <taxon>Pseudomonadati</taxon>
        <taxon>Pseudomonadota</taxon>
        <taxon>Gammaproteobacteria</taxon>
        <taxon>Pasteurellales</taxon>
        <taxon>Pasteurellaceae</taxon>
        <taxon>Haemophilus</taxon>
    </lineage>
</organism>